<organism>
    <name type="scientific">Homo sapiens</name>
    <name type="common">Human</name>
    <dbReference type="NCBI Taxonomy" id="9606"/>
    <lineage>
        <taxon>Eukaryota</taxon>
        <taxon>Metazoa</taxon>
        <taxon>Chordata</taxon>
        <taxon>Craniata</taxon>
        <taxon>Vertebrata</taxon>
        <taxon>Euteleostomi</taxon>
        <taxon>Mammalia</taxon>
        <taxon>Eutheria</taxon>
        <taxon>Euarchontoglires</taxon>
        <taxon>Primates</taxon>
        <taxon>Haplorrhini</taxon>
        <taxon>Catarrhini</taxon>
        <taxon>Hominidae</taxon>
        <taxon>Homo</taxon>
    </lineage>
</organism>
<proteinExistence type="evidence at protein level"/>
<sequence>MRTKPQRPRATRSYLGQPCGSPRRTEETGETWERVAFSLFTHTCTQPLAGTVDTHLPSLLLPVILHPLGAASAGRALEPKADPHTCPYGRKESRGEKVRRGRAKSNSGPNVPGPPAAPQSLKSGSPSTRR</sequence>
<name>SRSP_HUMAN</name>
<protein>
    <recommendedName>
        <fullName evidence="3">Splicing regulatory small protein</fullName>
    </recommendedName>
</protein>
<comment type="function">
    <text evidence="2">Interacts with the splicing factor SRSF3 and increases its binding to specific exons within pre-mRNA, thereby regulating exon-inclusion during alternative splicing (PubMed:32440474). Does not directly bind pre-mRNA and could regulate a wider range of splicing factors through a similar mechanism (PubMed:32440474).</text>
</comment>
<comment type="subunit">
    <text evidence="2">Interacts with SRSF3; increases SRSF3 binding to specific exons.</text>
</comment>
<comment type="subcellular location">
    <subcellularLocation>
        <location evidence="2">Nucleus</location>
    </subcellularLocation>
</comment>
<evidence type="ECO:0000256" key="1">
    <source>
        <dbReference type="SAM" id="MobiDB-lite"/>
    </source>
</evidence>
<evidence type="ECO:0000269" key="2">
    <source>
    </source>
</evidence>
<evidence type="ECO:0000303" key="3">
    <source>
    </source>
</evidence>
<keyword id="KW-0507">mRNA processing</keyword>
<keyword id="KW-0508">mRNA splicing</keyword>
<keyword id="KW-0539">Nucleus</keyword>
<keyword id="KW-1185">Reference proteome</keyword>
<dbReference type="EMBL" id="AP001816">
    <property type="status" value="NOT_ANNOTATED_CDS"/>
    <property type="molecule type" value="Genomic_DNA"/>
</dbReference>
<dbReference type="Proteomes" id="UP000005640">
    <property type="component" value="Unplaced"/>
</dbReference>
<dbReference type="GO" id="GO:0005634">
    <property type="term" value="C:nucleus"/>
    <property type="evidence" value="ECO:0000314"/>
    <property type="project" value="UniProtKB"/>
</dbReference>
<dbReference type="GO" id="GO:0036002">
    <property type="term" value="F:pre-mRNA binding"/>
    <property type="evidence" value="ECO:0000314"/>
    <property type="project" value="UniProtKB"/>
</dbReference>
<dbReference type="GO" id="GO:0006397">
    <property type="term" value="P:mRNA processing"/>
    <property type="evidence" value="ECO:0007669"/>
    <property type="project" value="UniProtKB-KW"/>
</dbReference>
<dbReference type="GO" id="GO:0043484">
    <property type="term" value="P:regulation of RNA splicing"/>
    <property type="evidence" value="ECO:0000314"/>
    <property type="project" value="UniProtKB"/>
</dbReference>
<dbReference type="GO" id="GO:0008380">
    <property type="term" value="P:RNA splicing"/>
    <property type="evidence" value="ECO:0007669"/>
    <property type="project" value="UniProtKB-KW"/>
</dbReference>
<feature type="chain" id="PRO_0000459842" description="Splicing regulatory small protein">
    <location>
        <begin position="1"/>
        <end position="130"/>
    </location>
</feature>
<feature type="region of interest" description="Disordered" evidence="1">
    <location>
        <begin position="1"/>
        <end position="29"/>
    </location>
</feature>
<feature type="region of interest" description="Mediates interaction with SRSF3" evidence="2">
    <location>
        <begin position="16"/>
        <end position="22"/>
    </location>
</feature>
<feature type="region of interest" description="Disordered" evidence="1">
    <location>
        <begin position="74"/>
        <end position="130"/>
    </location>
</feature>
<feature type="compositionally biased region" description="Basic residues" evidence="1">
    <location>
        <begin position="1"/>
        <end position="10"/>
    </location>
</feature>
<feature type="compositionally biased region" description="Basic and acidic residues" evidence="1">
    <location>
        <begin position="77"/>
        <end position="98"/>
    </location>
</feature>
<feature type="compositionally biased region" description="Polar residues" evidence="1">
    <location>
        <begin position="120"/>
        <end position="130"/>
    </location>
</feature>
<reference key="1">
    <citation type="journal article" date="2005" name="Nature">
        <title>Generation and annotation of the DNA sequences of human chromosomes 2 and 4.</title>
        <authorList>
            <person name="Hillier L.W."/>
            <person name="Graves T.A."/>
            <person name="Fulton R.S."/>
            <person name="Fulton L.A."/>
            <person name="Pepin K.H."/>
            <person name="Minx P."/>
            <person name="Wagner-McPherson C."/>
            <person name="Layman D."/>
            <person name="Wylie K."/>
            <person name="Sekhon M."/>
            <person name="Becker M.C."/>
            <person name="Fewell G.A."/>
            <person name="Delehaunty K.D."/>
            <person name="Miner T.L."/>
            <person name="Nash W.E."/>
            <person name="Kremitzki C."/>
            <person name="Oddy L."/>
            <person name="Du H."/>
            <person name="Sun H."/>
            <person name="Bradshaw-Cordum H."/>
            <person name="Ali J."/>
            <person name="Carter J."/>
            <person name="Cordes M."/>
            <person name="Harris A."/>
            <person name="Isak A."/>
            <person name="van Brunt A."/>
            <person name="Nguyen C."/>
            <person name="Du F."/>
            <person name="Courtney L."/>
            <person name="Kalicki J."/>
            <person name="Ozersky P."/>
            <person name="Abbott S."/>
            <person name="Armstrong J."/>
            <person name="Belter E.A."/>
            <person name="Caruso L."/>
            <person name="Cedroni M."/>
            <person name="Cotton M."/>
            <person name="Davidson T."/>
            <person name="Desai A."/>
            <person name="Elliott G."/>
            <person name="Erb T."/>
            <person name="Fronick C."/>
            <person name="Gaige T."/>
            <person name="Haakenson W."/>
            <person name="Haglund K."/>
            <person name="Holmes A."/>
            <person name="Harkins R."/>
            <person name="Kim K."/>
            <person name="Kruchowski S.S."/>
            <person name="Strong C.M."/>
            <person name="Grewal N."/>
            <person name="Goyea E."/>
            <person name="Hou S."/>
            <person name="Levy A."/>
            <person name="Martinka S."/>
            <person name="Mead K."/>
            <person name="McLellan M.D."/>
            <person name="Meyer R."/>
            <person name="Randall-Maher J."/>
            <person name="Tomlinson C."/>
            <person name="Dauphin-Kohlberg S."/>
            <person name="Kozlowicz-Reilly A."/>
            <person name="Shah N."/>
            <person name="Swearengen-Shahid S."/>
            <person name="Snider J."/>
            <person name="Strong J.T."/>
            <person name="Thompson J."/>
            <person name="Yoakum M."/>
            <person name="Leonard S."/>
            <person name="Pearman C."/>
            <person name="Trani L."/>
            <person name="Radionenko M."/>
            <person name="Waligorski J.E."/>
            <person name="Wang C."/>
            <person name="Rock S.M."/>
            <person name="Tin-Wollam A.-M."/>
            <person name="Maupin R."/>
            <person name="Latreille P."/>
            <person name="Wendl M.C."/>
            <person name="Yang S.-P."/>
            <person name="Pohl C."/>
            <person name="Wallis J.W."/>
            <person name="Spieth J."/>
            <person name="Bieri T.A."/>
            <person name="Berkowicz N."/>
            <person name="Nelson J.O."/>
            <person name="Osborne J."/>
            <person name="Ding L."/>
            <person name="Meyer R."/>
            <person name="Sabo A."/>
            <person name="Shotland Y."/>
            <person name="Sinha P."/>
            <person name="Wohldmann P.E."/>
            <person name="Cook L.L."/>
            <person name="Hickenbotham M.T."/>
            <person name="Eldred J."/>
            <person name="Williams D."/>
            <person name="Jones T.A."/>
            <person name="She X."/>
            <person name="Ciccarelli F.D."/>
            <person name="Izaurralde E."/>
            <person name="Taylor J."/>
            <person name="Schmutz J."/>
            <person name="Myers R.M."/>
            <person name="Cox D.R."/>
            <person name="Huang X."/>
            <person name="McPherson J.D."/>
            <person name="Mardis E.R."/>
            <person name="Clifton S.W."/>
            <person name="Warren W.C."/>
            <person name="Chinwalla A.T."/>
            <person name="Eddy S.R."/>
            <person name="Marra M.A."/>
            <person name="Ovcharenko I."/>
            <person name="Furey T.S."/>
            <person name="Miller W."/>
            <person name="Eichler E.E."/>
            <person name="Bork P."/>
            <person name="Suyama M."/>
            <person name="Torrents D."/>
            <person name="Waterston R.H."/>
            <person name="Wilson R.K."/>
        </authorList>
    </citation>
    <scope>NUCLEOTIDE SEQUENCE [LARGE SCALE GENOMIC DNA]</scope>
</reference>
<reference key="2">
    <citation type="journal article" date="2020" name="Adv. Sci.">
        <title>Small protein hidden in lncRNA LOC90024 promotes 'cancerous' RNA splicing and tumorigenesis.</title>
        <authorList>
            <person name="Meng N."/>
            <person name="Chen M."/>
            <person name="Chen D."/>
            <person name="Chen X.H."/>
            <person name="Wang J.Z."/>
            <person name="Zhu S."/>
            <person name="He Y.T."/>
            <person name="Zhang X.L."/>
            <person name="Lu R.X."/>
            <person name="Yan G.R."/>
        </authorList>
    </citation>
    <scope>IDENTIFICATION BY MASS SPECTROMETRY</scope>
    <scope>FUNCTION</scope>
    <scope>INTERACTION WITH SRSF3</scope>
    <scope>REGION</scope>
</reference>
<accession>P0DXC1</accession>
<gene>
    <name evidence="3" type="primary">SRSP</name>
</gene>